<protein>
    <recommendedName>
        <fullName evidence="2">Outer capsid glycoprotein VP7</fullName>
    </recommendedName>
</protein>
<dbReference type="EMBL" id="M23194">
    <property type="protein sequence ID" value="AAA47099.1"/>
    <property type="molecule type" value="mRNA"/>
</dbReference>
<dbReference type="PIR" id="A31160">
    <property type="entry name" value="VGXRPY"/>
</dbReference>
<dbReference type="GO" id="GO:0044166">
    <property type="term" value="C:host cell endoplasmic reticulum lumen"/>
    <property type="evidence" value="ECO:0007669"/>
    <property type="project" value="UniProtKB-SubCell"/>
</dbReference>
<dbReference type="GO" id="GO:0039621">
    <property type="term" value="C:T=13 icosahedral viral capsid"/>
    <property type="evidence" value="ECO:0007669"/>
    <property type="project" value="UniProtKB-UniRule"/>
</dbReference>
<dbReference type="GO" id="GO:0039624">
    <property type="term" value="C:viral outer capsid"/>
    <property type="evidence" value="ECO:0007669"/>
    <property type="project" value="UniProtKB-UniRule"/>
</dbReference>
<dbReference type="GO" id="GO:0046872">
    <property type="term" value="F:metal ion binding"/>
    <property type="evidence" value="ECO:0007669"/>
    <property type="project" value="UniProtKB-KW"/>
</dbReference>
<dbReference type="FunFam" id="2.60.120.800:FF:000001">
    <property type="entry name" value="Outer capsid glycoprotein VP7"/>
    <property type="match status" value="1"/>
</dbReference>
<dbReference type="Gene3D" id="3.40.50.11130">
    <property type="entry name" value="Glycoprotein VP7, domain 1"/>
    <property type="match status" value="1"/>
</dbReference>
<dbReference type="Gene3D" id="2.60.120.800">
    <property type="entry name" value="Rotavirus outer-layer protein VP7, domain 2"/>
    <property type="match status" value="1"/>
</dbReference>
<dbReference type="HAMAP" id="MF_04130">
    <property type="entry name" value="Rota_VP7"/>
    <property type="match status" value="1"/>
</dbReference>
<dbReference type="HAMAP" id="MF_04131">
    <property type="entry name" value="Rota_VP7_A"/>
    <property type="match status" value="1"/>
</dbReference>
<dbReference type="InterPro" id="IPR001963">
    <property type="entry name" value="VP7"/>
</dbReference>
<dbReference type="InterPro" id="IPR042207">
    <property type="entry name" value="VP7_1"/>
</dbReference>
<dbReference type="InterPro" id="IPR042210">
    <property type="entry name" value="VP7_2"/>
</dbReference>
<dbReference type="Pfam" id="PF00434">
    <property type="entry name" value="VP7"/>
    <property type="match status" value="1"/>
</dbReference>
<proteinExistence type="evidence at transcript level"/>
<keyword id="KW-0024">Alternative initiation</keyword>
<keyword id="KW-0106">Calcium</keyword>
<keyword id="KW-0167">Capsid protein</keyword>
<keyword id="KW-1015">Disulfide bond</keyword>
<keyword id="KW-0325">Glycoprotein</keyword>
<keyword id="KW-1038">Host endoplasmic reticulum</keyword>
<keyword id="KW-0945">Host-virus interaction</keyword>
<keyword id="KW-0479">Metal-binding</keyword>
<keyword id="KW-1152">Outer capsid protein</keyword>
<keyword id="KW-0732">Signal</keyword>
<keyword id="KW-1146">T=13 icosahedral capsid protein</keyword>
<keyword id="KW-0946">Virion</keyword>
<organism>
    <name type="scientific">Rotavirus A (strain RVA/Pig/Mexico/YM/1983/G11P9[7])</name>
    <name type="common">RV-A</name>
    <dbReference type="NCBI Taxonomy" id="10919"/>
    <lineage>
        <taxon>Viruses</taxon>
        <taxon>Riboviria</taxon>
        <taxon>Orthornavirae</taxon>
        <taxon>Duplornaviricota</taxon>
        <taxon>Resentoviricetes</taxon>
        <taxon>Reovirales</taxon>
        <taxon>Sedoreoviridae</taxon>
        <taxon>Rotavirus</taxon>
        <taxon>Rotavirus A</taxon>
    </lineage>
</organism>
<comment type="function">
    <text evidence="2">Calcium-binding protein that interacts with rotavirus cell receptors once the initial attachment by VP4 has been achieved. Rotavirus attachment and entry into the host cell probably involves multiple sequential contacts between the outer capsid proteins VP4 and VP7, and the cell receptors. Following entry into the host cell, low intracellular or intravesicular Ca(2+) concentration probably causes the calcium-stabilized VP7 trimers to dissociate from the virion. This step is probably necessary for the membrane-disrupting entry step and the release of VP4, which is locked onto the virion by VP7.</text>
</comment>
<comment type="subunit">
    <text evidence="2">Homotrimer; disulfide-linked. 2 Ca(2+) ions bound at each subunit interface in the trimer hold the trimer together. Interacts with the intermediate capsid protein VP6. Interacts with the outer capsid protein VP5*.</text>
</comment>
<comment type="subcellular location">
    <subcellularLocation>
        <location evidence="2">Virion</location>
    </subcellularLocation>
    <subcellularLocation>
        <location evidence="2">Host endoplasmic reticulum lumen</location>
    </subcellularLocation>
    <text evidence="2">The outer layer contains 780 copies of VP7, grouped as 260 trimers. Immature double-layered particles assembled in the cytoplasm bud across the membrane of the endoplasmic reticulum, acquiring during this process a transient lipid membrane that is modified with the ER resident viral glycoproteins NSP4 and VP7; these enveloped particles also contain VP4. As the particles move towards the interior of the ER cisternae, the transient lipid membrane and the non-structural protein NSP4 are lost, while the virus surface proteins VP4 and VP7 rearrange to form the outermost virus protein layer, yielding mature infectious triple-layered particles.</text>
</comment>
<comment type="alternative products">
    <event type="alternative initiation"/>
    <isoform>
        <id>P17466-1</id>
        <name>1</name>
        <sequence type="displayed"/>
    </isoform>
    <isoform>
        <id>P17466-2</id>
        <name>2</name>
        <sequence type="described" ref="VSP_038636"/>
    </isoform>
</comment>
<comment type="PTM">
    <text evidence="2">N-glycosylated.</text>
</comment>
<comment type="PTM">
    <text evidence="2">The N-terminus is blocked possibly by pyroglutamic acid.</text>
</comment>
<comment type="miscellaneous">
    <text evidence="2">Some rotavirus strains are neuraminidase-sensitive and require sialic acid to attach to the cell surface. Some rotavirus strains are integrin-dependent. Some rotavirus strains depend on ganglioside for their entry into the host cell. Hsp70 also seems to be involved in the entry of some strains.</text>
</comment>
<comment type="miscellaneous">
    <text evidence="2">In group A rotaviruses, VP7 defines the G serotype.</text>
</comment>
<comment type="miscellaneous">
    <molecule>Isoform 2</molecule>
    <text evidence="3">Produced by alternative initiation at Met-30 of isoform 1.</text>
</comment>
<comment type="similarity">
    <text evidence="2">Belongs to the rotavirus VP7 family.</text>
</comment>
<reference key="1">
    <citation type="journal article" date="1988" name="J. Virol.">
        <title>Molecular and antigenic characterization of porcine rotavirus YM, a possible new rotavirus serotype.</title>
        <authorList>
            <person name="Ruiz A.M."/>
            <person name="Lopez I.V."/>
            <person name="Lopez S."/>
            <person name="Espejo R.T."/>
            <person name="Arias C.F."/>
        </authorList>
    </citation>
    <scope>NUCLEOTIDE SEQUENCE [MRNA]</scope>
</reference>
<feature type="signal peptide" evidence="2">
    <location>
        <begin position="1"/>
        <end position="50"/>
    </location>
</feature>
<feature type="chain" id="PRO_0000149619" description="Outer capsid glycoprotein VP7" evidence="2">
    <location>
        <begin position="51"/>
        <end position="326"/>
    </location>
</feature>
<feature type="region of interest" description="CNP motif; interaction with ITGAV/ITGB3" evidence="2">
    <location>
        <begin position="165"/>
        <end position="167"/>
    </location>
</feature>
<feature type="region of interest" description="LVD motif; interaction with ITGA4/ITGB1 heterodimer" evidence="2">
    <location>
        <begin position="237"/>
        <end position="239"/>
    </location>
</feature>
<feature type="region of interest" description="GPR motif; interaction with ITGAX/ITGB2" evidence="2">
    <location>
        <begin position="253"/>
        <end position="255"/>
    </location>
</feature>
<feature type="binding site" evidence="2">
    <location>
        <position position="95"/>
    </location>
    <ligand>
        <name>Ca(2+)</name>
        <dbReference type="ChEBI" id="CHEBI:29108"/>
        <label>1</label>
    </ligand>
</feature>
<feature type="binding site" evidence="2">
    <location>
        <position position="177"/>
    </location>
    <ligand>
        <name>Ca(2+)</name>
        <dbReference type="ChEBI" id="CHEBI:29108"/>
        <label>2</label>
    </ligand>
</feature>
<feature type="binding site" evidence="2">
    <location>
        <position position="206"/>
    </location>
    <ligand>
        <name>Ca(2+)</name>
        <dbReference type="ChEBI" id="CHEBI:29108"/>
        <label>1</label>
    </ligand>
</feature>
<feature type="binding site" evidence="2">
    <location>
        <position position="214"/>
    </location>
    <ligand>
        <name>Ca(2+)</name>
        <dbReference type="ChEBI" id="CHEBI:29108"/>
        <label>1</label>
    </ligand>
</feature>
<feature type="binding site" evidence="2">
    <location>
        <position position="216"/>
    </location>
    <ligand>
        <name>Ca(2+)</name>
        <dbReference type="ChEBI" id="CHEBI:29108"/>
        <label>1</label>
    </ligand>
</feature>
<feature type="binding site" evidence="2">
    <location>
        <position position="228"/>
    </location>
    <ligand>
        <name>Ca(2+)</name>
        <dbReference type="ChEBI" id="CHEBI:29108"/>
        <label>2</label>
    </ligand>
</feature>
<feature type="binding site" evidence="2">
    <location>
        <position position="229"/>
    </location>
    <ligand>
        <name>Ca(2+)</name>
        <dbReference type="ChEBI" id="CHEBI:29108"/>
        <label>2</label>
    </ligand>
</feature>
<feature type="binding site" evidence="2">
    <location>
        <position position="231"/>
    </location>
    <ligand>
        <name>Ca(2+)</name>
        <dbReference type="ChEBI" id="CHEBI:29108"/>
        <label>2</label>
    </ligand>
</feature>
<feature type="binding site" evidence="2">
    <location>
        <position position="301"/>
    </location>
    <ligand>
        <name>Ca(2+)</name>
        <dbReference type="ChEBI" id="CHEBI:29108"/>
        <label>2</label>
    </ligand>
</feature>
<feature type="glycosylation site" description="N-linked (GlcNAc...) asparagine; by host" evidence="1">
    <location>
        <position position="69"/>
    </location>
</feature>
<feature type="disulfide bond" evidence="2">
    <location>
        <begin position="82"/>
        <end position="135"/>
    </location>
</feature>
<feature type="disulfide bond" evidence="2">
    <location>
        <begin position="165"/>
        <end position="249"/>
    </location>
</feature>
<feature type="disulfide bond" evidence="2">
    <location>
        <begin position="191"/>
        <end position="244"/>
    </location>
</feature>
<feature type="disulfide bond" evidence="2">
    <location>
        <begin position="196"/>
        <end position="207"/>
    </location>
</feature>
<feature type="splice variant" id="VSP_038636" description="In isoform 2." evidence="3">
    <location>
        <begin position="1"/>
        <end position="29"/>
    </location>
</feature>
<sequence length="326" mass="37239">MYGIEYTTILTXLISLIFITYILKSITRTMDFIIYRFLFVIVVLAPFVKTQNYGINLPITGSMDTPYMNSTMSETFLTSTLCLYYPHEAATQIADDKWKDTLSQLFLTKGWSTGSVYFKEYTDIASFSVDPQLYCDYNIVLMKYDGNSQLDMSELADLILNEWLCNPMDITLYYYQQTDEANKWISMGNSCTIKVCPLNTQTLGIGCLTTDPTTFEEVASAEKLVITDVVDGVNHKLDVTTATCTIRNCKKLGPRENVAVIQVGGSNILDITADPTTAPQTERMMRINWKKWWQVFYTIVDYVNQIVQVMSKRSRSLNSAAFYYRI</sequence>
<accession>P17466</accession>
<evidence type="ECO:0000255" key="1"/>
<evidence type="ECO:0000255" key="2">
    <source>
        <dbReference type="HAMAP-Rule" id="MF_04131"/>
    </source>
</evidence>
<evidence type="ECO:0000305" key="3"/>
<organismHost>
    <name type="scientific">Sus scrofa</name>
    <name type="common">Pig</name>
    <dbReference type="NCBI Taxonomy" id="9823"/>
</organismHost>
<name>VP7_ROTPY</name>